<accession>Q9HD67</accession>
<accession>A7E2D1</accession>
<accession>O94893</accession>
<accession>Q8IVX5</accession>
<accession>Q9NYM7</accession>
<accession>Q9P110</accession>
<accession>Q9P111</accession>
<accession>Q9UHF6</accession>
<proteinExistence type="evidence at protein level"/>
<name>MYO10_HUMAN</name>
<dbReference type="EMBL" id="AF247457">
    <property type="protein sequence ID" value="AAF68025.2"/>
    <property type="molecule type" value="mRNA"/>
</dbReference>
<dbReference type="EMBL" id="AF234532">
    <property type="protein sequence ID" value="AAF37875.1"/>
    <property type="molecule type" value="mRNA"/>
</dbReference>
<dbReference type="EMBL" id="AF132021">
    <property type="protein sequence ID" value="AAF36524.1"/>
    <property type="molecule type" value="mRNA"/>
</dbReference>
<dbReference type="EMBL" id="AF132022">
    <property type="protein sequence ID" value="AAF36525.1"/>
    <property type="molecule type" value="mRNA"/>
</dbReference>
<dbReference type="EMBL" id="AB018342">
    <property type="protein sequence ID" value="BAA34519.2"/>
    <property type="status" value="ALT_INIT"/>
    <property type="molecule type" value="mRNA"/>
</dbReference>
<dbReference type="EMBL" id="AC010310">
    <property type="status" value="NOT_ANNOTATED_CDS"/>
    <property type="molecule type" value="Genomic_DNA"/>
</dbReference>
<dbReference type="EMBL" id="AC010607">
    <property type="status" value="NOT_ANNOTATED_CDS"/>
    <property type="molecule type" value="Genomic_DNA"/>
</dbReference>
<dbReference type="EMBL" id="AC024588">
    <property type="status" value="NOT_ANNOTATED_CDS"/>
    <property type="molecule type" value="Genomic_DNA"/>
</dbReference>
<dbReference type="EMBL" id="BC041694">
    <property type="protein sequence ID" value="AAH41694.1"/>
    <property type="molecule type" value="mRNA"/>
</dbReference>
<dbReference type="EMBL" id="BC050682">
    <property type="protein sequence ID" value="AAH50682.1"/>
    <property type="molecule type" value="mRNA"/>
</dbReference>
<dbReference type="EMBL" id="BC108736">
    <property type="protein sequence ID" value="AAI08737.1"/>
    <property type="molecule type" value="mRNA"/>
</dbReference>
<dbReference type="EMBL" id="BC137168">
    <property type="protein sequence ID" value="AAI37169.1"/>
    <property type="molecule type" value="mRNA"/>
</dbReference>
<dbReference type="EMBL" id="BC150285">
    <property type="protein sequence ID" value="AAI50286.1"/>
    <property type="molecule type" value="mRNA"/>
</dbReference>
<dbReference type="EMBL" id="AI878891">
    <property type="status" value="NOT_ANNOTATED_CDS"/>
    <property type="molecule type" value="mRNA"/>
</dbReference>
<dbReference type="EMBL" id="AF184153">
    <property type="protein sequence ID" value="AAF17363.1"/>
    <property type="molecule type" value="mRNA"/>
</dbReference>
<dbReference type="CCDS" id="CCDS54834.1">
    <molecule id="Q9HD67-1"/>
</dbReference>
<dbReference type="PIR" id="A59267">
    <property type="entry name" value="A59267"/>
</dbReference>
<dbReference type="RefSeq" id="NP_036466.2">
    <molecule id="Q9HD67-1"/>
    <property type="nucleotide sequence ID" value="NM_012334.3"/>
</dbReference>
<dbReference type="RefSeq" id="XP_005248364.1">
    <molecule id="Q9HD67-3"/>
    <property type="nucleotide sequence ID" value="XM_005248307.3"/>
</dbReference>
<dbReference type="RefSeq" id="XP_011512348.1">
    <molecule id="Q9HD67-3"/>
    <property type="nucleotide sequence ID" value="XM_011514046.3"/>
</dbReference>
<dbReference type="PDB" id="2LW9">
    <property type="method" value="NMR"/>
    <property type="chains" value="A/B=883-933"/>
</dbReference>
<dbReference type="PDB" id="3AU4">
    <property type="method" value="X-ray"/>
    <property type="resolution" value="1.90 A"/>
    <property type="chains" value="A=1486-2058"/>
</dbReference>
<dbReference type="PDB" id="3AU5">
    <property type="method" value="X-ray"/>
    <property type="resolution" value="2.55 A"/>
    <property type="chains" value="A/B=1486-2058"/>
</dbReference>
<dbReference type="PDB" id="3PZD">
    <property type="method" value="X-ray"/>
    <property type="resolution" value="2.50 A"/>
    <property type="chains" value="A=1503-2047"/>
</dbReference>
<dbReference type="PDB" id="5I0H">
    <property type="method" value="X-ray"/>
    <property type="resolution" value="1.80 A"/>
    <property type="chains" value="A/B=1-741"/>
</dbReference>
<dbReference type="PDB" id="5I0I">
    <property type="method" value="X-ray"/>
    <property type="resolution" value="3.15 A"/>
    <property type="chains" value="A/B=3-793"/>
</dbReference>
<dbReference type="PDB" id="5KG8">
    <property type="method" value="EM"/>
    <property type="resolution" value="9.10 A"/>
    <property type="chains" value="A=3-741"/>
</dbReference>
<dbReference type="PDBsum" id="2LW9"/>
<dbReference type="PDBsum" id="3AU4"/>
<dbReference type="PDBsum" id="3AU5"/>
<dbReference type="PDBsum" id="3PZD"/>
<dbReference type="PDBsum" id="5I0H"/>
<dbReference type="PDBsum" id="5I0I"/>
<dbReference type="PDBsum" id="5KG8"/>
<dbReference type="BMRB" id="Q9HD67"/>
<dbReference type="EMDB" id="EMD-8244"/>
<dbReference type="SASBDB" id="Q9HD67"/>
<dbReference type="SMR" id="Q9HD67"/>
<dbReference type="BioGRID" id="110735">
    <property type="interactions" value="149"/>
</dbReference>
<dbReference type="DIP" id="DIP-46151N"/>
<dbReference type="FunCoup" id="Q9HD67">
    <property type="interactions" value="679"/>
</dbReference>
<dbReference type="IntAct" id="Q9HD67">
    <property type="interactions" value="35"/>
</dbReference>
<dbReference type="MINT" id="Q9HD67"/>
<dbReference type="STRING" id="9606.ENSP00000421280"/>
<dbReference type="GlyGen" id="Q9HD67">
    <property type="glycosylation" value="1 site, 1 O-linked glycan (1 site)"/>
</dbReference>
<dbReference type="iPTMnet" id="Q9HD67"/>
<dbReference type="PhosphoSitePlus" id="Q9HD67"/>
<dbReference type="BioMuta" id="MYO10"/>
<dbReference type="DMDM" id="205371854"/>
<dbReference type="jPOST" id="Q9HD67"/>
<dbReference type="MassIVE" id="Q9HD67"/>
<dbReference type="PaxDb" id="9606-ENSP00000421280"/>
<dbReference type="PeptideAtlas" id="Q9HD67"/>
<dbReference type="ProteomicsDB" id="70789"/>
<dbReference type="ProteomicsDB" id="81840">
    <molecule id="Q9HD67-1"/>
</dbReference>
<dbReference type="Pumba" id="Q9HD67"/>
<dbReference type="Antibodypedia" id="4455">
    <property type="antibodies" value="114 antibodies from 24 providers"/>
</dbReference>
<dbReference type="DNASU" id="4651"/>
<dbReference type="Ensembl" id="ENST00000507288.1">
    <molecule id="Q9HD67-2"/>
    <property type="protein sequence ID" value="ENSP00000426664.1"/>
    <property type="gene ID" value="ENSG00000145555.15"/>
</dbReference>
<dbReference type="Ensembl" id="ENST00000513610.6">
    <molecule id="Q9HD67-1"/>
    <property type="protein sequence ID" value="ENSP00000421280.1"/>
    <property type="gene ID" value="ENSG00000145555.15"/>
</dbReference>
<dbReference type="GeneID" id="4651"/>
<dbReference type="KEGG" id="hsa:4651"/>
<dbReference type="MANE-Select" id="ENST00000513610.6">
    <property type="protein sequence ID" value="ENSP00000421280.1"/>
    <property type="RefSeq nucleotide sequence ID" value="NM_012334.3"/>
    <property type="RefSeq protein sequence ID" value="NP_036466.2"/>
</dbReference>
<dbReference type="UCSC" id="uc003jft.5">
    <molecule id="Q9HD67-1"/>
    <property type="organism name" value="human"/>
</dbReference>
<dbReference type="AGR" id="HGNC:7593"/>
<dbReference type="CTD" id="4651"/>
<dbReference type="DisGeNET" id="4651"/>
<dbReference type="GeneCards" id="MYO10"/>
<dbReference type="HGNC" id="HGNC:7593">
    <property type="gene designation" value="MYO10"/>
</dbReference>
<dbReference type="HPA" id="ENSG00000145555">
    <property type="expression patterns" value="Low tissue specificity"/>
</dbReference>
<dbReference type="MIM" id="601481">
    <property type="type" value="gene"/>
</dbReference>
<dbReference type="neXtProt" id="NX_Q9HD67"/>
<dbReference type="OpenTargets" id="ENSG00000145555"/>
<dbReference type="PharmGKB" id="PA31394"/>
<dbReference type="VEuPathDB" id="HostDB:ENSG00000145555"/>
<dbReference type="eggNOG" id="KOG4229">
    <property type="taxonomic scope" value="Eukaryota"/>
</dbReference>
<dbReference type="GeneTree" id="ENSGT00940000155469"/>
<dbReference type="HOGENOM" id="CLU_001626_1_0_1"/>
<dbReference type="InParanoid" id="Q9HD67"/>
<dbReference type="OMA" id="HSEWQLG"/>
<dbReference type="OrthoDB" id="6108017at2759"/>
<dbReference type="PAN-GO" id="Q9HD67">
    <property type="GO annotations" value="7 GO annotations based on evolutionary models"/>
</dbReference>
<dbReference type="PhylomeDB" id="Q9HD67"/>
<dbReference type="TreeFam" id="TF316834"/>
<dbReference type="PathwayCommons" id="Q9HD67"/>
<dbReference type="Reactome" id="R-HSA-2029482">
    <property type="pathway name" value="Regulation of actin dynamics for phagocytic cup formation"/>
</dbReference>
<dbReference type="Reactome" id="R-HSA-373752">
    <property type="pathway name" value="Netrin-1 signaling"/>
</dbReference>
<dbReference type="Reactome" id="R-HSA-9664422">
    <property type="pathway name" value="FCGR3A-mediated phagocytosis"/>
</dbReference>
<dbReference type="SignaLink" id="Q9HD67"/>
<dbReference type="SIGNOR" id="Q9HD67"/>
<dbReference type="BioGRID-ORCS" id="4651">
    <property type="hits" value="32 hits in 1156 CRISPR screens"/>
</dbReference>
<dbReference type="ChiTaRS" id="MYO10">
    <property type="organism name" value="human"/>
</dbReference>
<dbReference type="EvolutionaryTrace" id="Q9HD67"/>
<dbReference type="GeneWiki" id="MYO10"/>
<dbReference type="GenomeRNAi" id="4651"/>
<dbReference type="Pharos" id="Q9HD67">
    <property type="development level" value="Tbio"/>
</dbReference>
<dbReference type="PRO" id="PR:Q9HD67"/>
<dbReference type="Proteomes" id="UP000005640">
    <property type="component" value="Chromosome 5"/>
</dbReference>
<dbReference type="RNAct" id="Q9HD67">
    <property type="molecule type" value="protein"/>
</dbReference>
<dbReference type="Bgee" id="ENSG00000145555">
    <property type="expression patterns" value="Expressed in buccal mucosa cell and 207 other cell types or tissues"/>
</dbReference>
<dbReference type="ExpressionAtlas" id="Q9HD67">
    <property type="expression patterns" value="baseline and differential"/>
</dbReference>
<dbReference type="GO" id="GO:0005938">
    <property type="term" value="C:cell cortex"/>
    <property type="evidence" value="ECO:0007669"/>
    <property type="project" value="UniProtKB-SubCell"/>
</dbReference>
<dbReference type="GO" id="GO:0005829">
    <property type="term" value="C:cytosol"/>
    <property type="evidence" value="ECO:0000314"/>
    <property type="project" value="HPA"/>
</dbReference>
<dbReference type="GO" id="GO:0030175">
    <property type="term" value="C:filopodium"/>
    <property type="evidence" value="ECO:0000318"/>
    <property type="project" value="GO_Central"/>
</dbReference>
<dbReference type="GO" id="GO:0031527">
    <property type="term" value="C:filopodium membrane"/>
    <property type="evidence" value="ECO:0007669"/>
    <property type="project" value="UniProtKB-SubCell"/>
</dbReference>
<dbReference type="GO" id="GO:0032433">
    <property type="term" value="C:filopodium tip"/>
    <property type="evidence" value="ECO:0000250"/>
    <property type="project" value="UniProtKB"/>
</dbReference>
<dbReference type="GO" id="GO:0030027">
    <property type="term" value="C:lamellipodium"/>
    <property type="evidence" value="ECO:0007669"/>
    <property type="project" value="UniProtKB-SubCell"/>
</dbReference>
<dbReference type="GO" id="GO:0016459">
    <property type="term" value="C:myosin complex"/>
    <property type="evidence" value="ECO:0007669"/>
    <property type="project" value="UniProtKB-KW"/>
</dbReference>
<dbReference type="GO" id="GO:0043005">
    <property type="term" value="C:neuron projection"/>
    <property type="evidence" value="ECO:0007669"/>
    <property type="project" value="Ensembl"/>
</dbReference>
<dbReference type="GO" id="GO:0043025">
    <property type="term" value="C:neuronal cell body"/>
    <property type="evidence" value="ECO:0007669"/>
    <property type="project" value="Ensembl"/>
</dbReference>
<dbReference type="GO" id="GO:0005730">
    <property type="term" value="C:nucleolus"/>
    <property type="evidence" value="ECO:0000314"/>
    <property type="project" value="HPA"/>
</dbReference>
<dbReference type="GO" id="GO:0005886">
    <property type="term" value="C:plasma membrane"/>
    <property type="evidence" value="ECO:0000314"/>
    <property type="project" value="HPA"/>
</dbReference>
<dbReference type="GO" id="GO:0001726">
    <property type="term" value="C:ruffle"/>
    <property type="evidence" value="ECO:0007669"/>
    <property type="project" value="UniProtKB-SubCell"/>
</dbReference>
<dbReference type="GO" id="GO:0051015">
    <property type="term" value="F:actin filament binding"/>
    <property type="evidence" value="ECO:0000250"/>
    <property type="project" value="UniProtKB"/>
</dbReference>
<dbReference type="GO" id="GO:0005524">
    <property type="term" value="F:ATP binding"/>
    <property type="evidence" value="ECO:0007669"/>
    <property type="project" value="UniProtKB-KW"/>
</dbReference>
<dbReference type="GO" id="GO:0005516">
    <property type="term" value="F:calmodulin binding"/>
    <property type="evidence" value="ECO:0007669"/>
    <property type="project" value="UniProtKB-KW"/>
</dbReference>
<dbReference type="GO" id="GO:0000146">
    <property type="term" value="F:microfilament motor activity"/>
    <property type="evidence" value="ECO:0000250"/>
    <property type="project" value="UniProtKB"/>
</dbReference>
<dbReference type="GO" id="GO:0005547">
    <property type="term" value="F:phosphatidylinositol-3,4,5-trisphosphate binding"/>
    <property type="evidence" value="ECO:0000250"/>
    <property type="project" value="UniProtKB"/>
</dbReference>
<dbReference type="GO" id="GO:0060002">
    <property type="term" value="F:plus-end directed microfilament motor activity"/>
    <property type="evidence" value="ECO:0000250"/>
    <property type="project" value="UniProtKB"/>
</dbReference>
<dbReference type="GO" id="GO:0030507">
    <property type="term" value="F:spectrin binding"/>
    <property type="evidence" value="ECO:0000314"/>
    <property type="project" value="MGI"/>
</dbReference>
<dbReference type="GO" id="GO:0030705">
    <property type="term" value="P:cytoskeleton-dependent intracellular transport"/>
    <property type="evidence" value="ECO:0000250"/>
    <property type="project" value="UniProtKB"/>
</dbReference>
<dbReference type="GO" id="GO:0022409">
    <property type="term" value="P:positive regulation of cell-cell adhesion"/>
    <property type="evidence" value="ECO:0007669"/>
    <property type="project" value="Ensembl"/>
</dbReference>
<dbReference type="GO" id="GO:0008360">
    <property type="term" value="P:regulation of cell shape"/>
    <property type="evidence" value="ECO:0000315"/>
    <property type="project" value="UniProtKB"/>
</dbReference>
<dbReference type="GO" id="GO:0051489">
    <property type="term" value="P:regulation of filopodium assembly"/>
    <property type="evidence" value="ECO:0000315"/>
    <property type="project" value="UniProtKB"/>
</dbReference>
<dbReference type="GO" id="GO:0007165">
    <property type="term" value="P:signal transduction"/>
    <property type="evidence" value="ECO:0007669"/>
    <property type="project" value="InterPro"/>
</dbReference>
<dbReference type="CDD" id="cd14473">
    <property type="entry name" value="FERM_B-lobe"/>
    <property type="match status" value="1"/>
</dbReference>
<dbReference type="CDD" id="cd13202">
    <property type="entry name" value="FERM_C_MyoX"/>
    <property type="match status" value="1"/>
</dbReference>
<dbReference type="CDD" id="cd17206">
    <property type="entry name" value="FERM_F1_Myosin-X"/>
    <property type="match status" value="1"/>
</dbReference>
<dbReference type="CDD" id="cd14873">
    <property type="entry name" value="MYSc_Myo10"/>
    <property type="match status" value="1"/>
</dbReference>
<dbReference type="CDD" id="cd13296">
    <property type="entry name" value="PH2_MyoX"/>
    <property type="match status" value="1"/>
</dbReference>
<dbReference type="CDD" id="cd13297">
    <property type="entry name" value="PH3_MyoX-like"/>
    <property type="match status" value="1"/>
</dbReference>
<dbReference type="FunFam" id="1.10.10.820:FF:000001">
    <property type="entry name" value="Myosin heavy chain"/>
    <property type="match status" value="1"/>
</dbReference>
<dbReference type="FunFam" id="1.25.40.530:FF:000001">
    <property type="entry name" value="Pleckstrin homology domain-containing family H member 2"/>
    <property type="match status" value="1"/>
</dbReference>
<dbReference type="FunFam" id="3.40.850.10:FF:000008">
    <property type="entry name" value="Putative unconventional myosin-IXa"/>
    <property type="match status" value="1"/>
</dbReference>
<dbReference type="FunFam" id="1.20.5.190:FF:000026">
    <property type="entry name" value="Unconventional myosin-X"/>
    <property type="match status" value="1"/>
</dbReference>
<dbReference type="FunFam" id="1.20.80.10:FF:000020">
    <property type="entry name" value="Unconventional myosin-X"/>
    <property type="match status" value="1"/>
</dbReference>
<dbReference type="FunFam" id="2.30.29.30:FF:000195">
    <property type="entry name" value="Unconventional myosin-X"/>
    <property type="match status" value="1"/>
</dbReference>
<dbReference type="FunFam" id="2.30.29.30:FF:000236">
    <property type="entry name" value="Unconventional myosin-X"/>
    <property type="match status" value="1"/>
</dbReference>
<dbReference type="FunFam" id="2.30.29.30:FF:000196">
    <property type="entry name" value="unconventional myosin-X"/>
    <property type="match status" value="1"/>
</dbReference>
<dbReference type="FunFam" id="3.10.20.90:FF:000126">
    <property type="entry name" value="unconventional myosin-X"/>
    <property type="match status" value="1"/>
</dbReference>
<dbReference type="Gene3D" id="1.10.10.820">
    <property type="match status" value="1"/>
</dbReference>
<dbReference type="Gene3D" id="1.20.5.170">
    <property type="match status" value="1"/>
</dbReference>
<dbReference type="Gene3D" id="1.20.5.190">
    <property type="match status" value="1"/>
</dbReference>
<dbReference type="Gene3D" id="1.20.58.530">
    <property type="match status" value="1"/>
</dbReference>
<dbReference type="Gene3D" id="1.20.80.10">
    <property type="match status" value="1"/>
</dbReference>
<dbReference type="Gene3D" id="6.20.240.20">
    <property type="match status" value="1"/>
</dbReference>
<dbReference type="Gene3D" id="3.40.850.10">
    <property type="entry name" value="Kinesin motor domain"/>
    <property type="match status" value="1"/>
</dbReference>
<dbReference type="Gene3D" id="1.20.120.720">
    <property type="entry name" value="Myosin VI head, motor domain, U50 subdomain"/>
    <property type="match status" value="1"/>
</dbReference>
<dbReference type="Gene3D" id="1.25.40.530">
    <property type="entry name" value="MyTH4 domain"/>
    <property type="match status" value="1"/>
</dbReference>
<dbReference type="Gene3D" id="3.10.20.90">
    <property type="entry name" value="Phosphatidylinositol 3-kinase Catalytic Subunit, Chain A, domain 1"/>
    <property type="match status" value="1"/>
</dbReference>
<dbReference type="Gene3D" id="2.30.29.30">
    <property type="entry name" value="Pleckstrin-homology domain (PH domain)/Phosphotyrosine-binding domain (PTB)"/>
    <property type="match status" value="4"/>
</dbReference>
<dbReference type="InterPro" id="IPR051724">
    <property type="entry name" value="Actin_motor_Myosin"/>
</dbReference>
<dbReference type="InterPro" id="IPR019749">
    <property type="entry name" value="Band_41_domain"/>
</dbReference>
<dbReference type="InterPro" id="IPR014352">
    <property type="entry name" value="FERM/acyl-CoA-bd_prot_sf"/>
</dbReference>
<dbReference type="InterPro" id="IPR035963">
    <property type="entry name" value="FERM_2"/>
</dbReference>
<dbReference type="InterPro" id="IPR019748">
    <property type="entry name" value="FERM_central"/>
</dbReference>
<dbReference type="InterPro" id="IPR000299">
    <property type="entry name" value="FERM_domain"/>
</dbReference>
<dbReference type="InterPro" id="IPR000048">
    <property type="entry name" value="IQ_motif_EF-hand-BS"/>
</dbReference>
<dbReference type="InterPro" id="IPR036961">
    <property type="entry name" value="Kinesin_motor_dom_sf"/>
</dbReference>
<dbReference type="InterPro" id="IPR031971">
    <property type="entry name" value="MYO10_CC"/>
</dbReference>
<dbReference type="InterPro" id="IPR001609">
    <property type="entry name" value="Myosin_head_motor_dom-like"/>
</dbReference>
<dbReference type="InterPro" id="IPR041797">
    <property type="entry name" value="MyoX_FERM_C"/>
</dbReference>
<dbReference type="InterPro" id="IPR040640">
    <property type="entry name" value="MyoX_N_SH3"/>
</dbReference>
<dbReference type="InterPro" id="IPR036124">
    <property type="entry name" value="MYSc_Myo10"/>
</dbReference>
<dbReference type="InterPro" id="IPR000857">
    <property type="entry name" value="MyTH4_dom"/>
</dbReference>
<dbReference type="InterPro" id="IPR038185">
    <property type="entry name" value="MyTH4_dom_sf"/>
</dbReference>
<dbReference type="InterPro" id="IPR027417">
    <property type="entry name" value="P-loop_NTPase"/>
</dbReference>
<dbReference type="InterPro" id="IPR011993">
    <property type="entry name" value="PH-like_dom_sf"/>
</dbReference>
<dbReference type="InterPro" id="IPR001849">
    <property type="entry name" value="PH_domain"/>
</dbReference>
<dbReference type="InterPro" id="IPR000159">
    <property type="entry name" value="RA_dom"/>
</dbReference>
<dbReference type="PANTHER" id="PTHR46049">
    <property type="entry name" value="AGAP003327-PA"/>
    <property type="match status" value="1"/>
</dbReference>
<dbReference type="PANTHER" id="PTHR46049:SF2">
    <property type="entry name" value="UNCONVENTIONAL MYOSIN-X"/>
    <property type="match status" value="1"/>
</dbReference>
<dbReference type="Pfam" id="PF00373">
    <property type="entry name" value="FERM_M"/>
    <property type="match status" value="1"/>
</dbReference>
<dbReference type="Pfam" id="PF00612">
    <property type="entry name" value="IQ"/>
    <property type="match status" value="3"/>
</dbReference>
<dbReference type="Pfam" id="PF16735">
    <property type="entry name" value="MYO10_CC"/>
    <property type="match status" value="1"/>
</dbReference>
<dbReference type="Pfam" id="PF00063">
    <property type="entry name" value="Myosin_head"/>
    <property type="match status" value="1"/>
</dbReference>
<dbReference type="Pfam" id="PF00784">
    <property type="entry name" value="MyTH4"/>
    <property type="match status" value="1"/>
</dbReference>
<dbReference type="Pfam" id="PF00169">
    <property type="entry name" value="PH"/>
    <property type="match status" value="2"/>
</dbReference>
<dbReference type="Pfam" id="PF21989">
    <property type="entry name" value="RA_2"/>
    <property type="match status" value="1"/>
</dbReference>
<dbReference type="Pfam" id="PF18597">
    <property type="entry name" value="SH3_19"/>
    <property type="match status" value="1"/>
</dbReference>
<dbReference type="PRINTS" id="PR00193">
    <property type="entry name" value="MYOSINHEAVY"/>
</dbReference>
<dbReference type="SMART" id="SM00295">
    <property type="entry name" value="B41"/>
    <property type="match status" value="1"/>
</dbReference>
<dbReference type="SMART" id="SM00015">
    <property type="entry name" value="IQ"/>
    <property type="match status" value="3"/>
</dbReference>
<dbReference type="SMART" id="SM00242">
    <property type="entry name" value="MYSc"/>
    <property type="match status" value="1"/>
</dbReference>
<dbReference type="SMART" id="SM00139">
    <property type="entry name" value="MyTH4"/>
    <property type="match status" value="1"/>
</dbReference>
<dbReference type="SMART" id="SM00233">
    <property type="entry name" value="PH"/>
    <property type="match status" value="2"/>
</dbReference>
<dbReference type="SUPFAM" id="SSF52540">
    <property type="entry name" value="P-loop containing nucleoside triphosphate hydrolases"/>
    <property type="match status" value="1"/>
</dbReference>
<dbReference type="SUPFAM" id="SSF50729">
    <property type="entry name" value="PH domain-like"/>
    <property type="match status" value="4"/>
</dbReference>
<dbReference type="SUPFAM" id="SSF47031">
    <property type="entry name" value="Second domain of FERM"/>
    <property type="match status" value="1"/>
</dbReference>
<dbReference type="PROSITE" id="PS50057">
    <property type="entry name" value="FERM_3"/>
    <property type="match status" value="1"/>
</dbReference>
<dbReference type="PROSITE" id="PS50096">
    <property type="entry name" value="IQ"/>
    <property type="match status" value="2"/>
</dbReference>
<dbReference type="PROSITE" id="PS51456">
    <property type="entry name" value="MYOSIN_MOTOR"/>
    <property type="match status" value="1"/>
</dbReference>
<dbReference type="PROSITE" id="PS51016">
    <property type="entry name" value="MYTH4"/>
    <property type="match status" value="1"/>
</dbReference>
<dbReference type="PROSITE" id="PS50003">
    <property type="entry name" value="PH_DOMAIN"/>
    <property type="match status" value="2"/>
</dbReference>
<gene>
    <name type="primary">MYO10</name>
    <name type="synonym">KIAA0799</name>
</gene>
<reference key="1">
    <citation type="journal article" date="2000" name="J. Cell Sci.">
        <title>Myosin-X, a novel myosin with pleckstrin homology domains, associates with regions of dynamic actin.</title>
        <authorList>
            <person name="Berg J.S."/>
            <person name="Derfler B.H."/>
            <person name="Pennisi C.M."/>
            <person name="Corey D.P."/>
            <person name="Cheney R.E."/>
        </authorList>
    </citation>
    <scope>NUCLEOTIDE SEQUENCE [MRNA] (ISOFORM 1)</scope>
    <scope>SUBCELLULAR LOCATION</scope>
    <scope>TISSUE SPECIFICITY</scope>
    <scope>VARIANTS TRP-324 AND THR-1663</scope>
</reference>
<reference key="2">
    <citation type="journal article" date="2001" name="J. Biol. Chem.">
        <title>The tumor-sensitive calmodulin-like protein is a specific light chain of human unconventional myosin X.</title>
        <authorList>
            <person name="Rogers M.S."/>
            <person name="Strehler E.E."/>
        </authorList>
    </citation>
    <scope>NUCLEOTIDE SEQUENCE [MRNA] (ISOFORM 1)</scope>
    <scope>VARIANTS TYR-148 AND THR-1663</scope>
    <scope>INTERACTION WITH CALM3/CLP</scope>
</reference>
<reference key="3">
    <citation type="submission" date="1999-02" db="EMBL/GenBank/DDBJ databases">
        <title>Cloning of human myosin X.</title>
        <authorList>
            <person name="Takada T."/>
            <person name="O'Farrell T.J."/>
            <person name="Anderson J.T."/>
            <person name="Pourmotabbed T."/>
        </authorList>
    </citation>
    <scope>NUCLEOTIDE SEQUENCE [MRNA] (ISOFORM 1)</scope>
    <scope>VARIANT TRP-324</scope>
    <source>
        <tissue>Colon adenocarcinoma</tissue>
    </source>
</reference>
<reference key="4">
    <citation type="journal article" date="1998" name="DNA Res.">
        <title>Prediction of the coding sequences of unidentified human genes. XI. The complete sequences of 100 new cDNA clones from brain which code for large proteins in vitro.</title>
        <authorList>
            <person name="Nagase T."/>
            <person name="Ishikawa K."/>
            <person name="Suyama M."/>
            <person name="Kikuno R."/>
            <person name="Miyajima N."/>
            <person name="Tanaka A."/>
            <person name="Kotani H."/>
            <person name="Nomura N."/>
            <person name="Ohara O."/>
        </authorList>
    </citation>
    <scope>NUCLEOTIDE SEQUENCE [LARGE SCALE MRNA] (ISOFORM 1)</scope>
    <scope>VARIANT THR-1663</scope>
    <source>
        <tissue>Brain</tissue>
    </source>
</reference>
<reference key="5">
    <citation type="submission" date="2003-01" db="EMBL/GenBank/DDBJ databases">
        <authorList>
            <person name="Nagase T."/>
            <person name="Kikuno R."/>
            <person name="Yamakawa H."/>
            <person name="Ohara O."/>
        </authorList>
    </citation>
    <scope>SEQUENCE REVISION</scope>
</reference>
<reference key="6">
    <citation type="journal article" date="2004" name="Nature">
        <title>The DNA sequence and comparative analysis of human chromosome 5.</title>
        <authorList>
            <person name="Schmutz J."/>
            <person name="Martin J."/>
            <person name="Terry A."/>
            <person name="Couronne O."/>
            <person name="Grimwood J."/>
            <person name="Lowry S."/>
            <person name="Gordon L.A."/>
            <person name="Scott D."/>
            <person name="Xie G."/>
            <person name="Huang W."/>
            <person name="Hellsten U."/>
            <person name="Tran-Gyamfi M."/>
            <person name="She X."/>
            <person name="Prabhakar S."/>
            <person name="Aerts A."/>
            <person name="Altherr M."/>
            <person name="Bajorek E."/>
            <person name="Black S."/>
            <person name="Branscomb E."/>
            <person name="Caoile C."/>
            <person name="Challacombe J.F."/>
            <person name="Chan Y.M."/>
            <person name="Denys M."/>
            <person name="Detter J.C."/>
            <person name="Escobar J."/>
            <person name="Flowers D."/>
            <person name="Fotopulos D."/>
            <person name="Glavina T."/>
            <person name="Gomez M."/>
            <person name="Gonzales E."/>
            <person name="Goodstein D."/>
            <person name="Grigoriev I."/>
            <person name="Groza M."/>
            <person name="Hammon N."/>
            <person name="Hawkins T."/>
            <person name="Haydu L."/>
            <person name="Israni S."/>
            <person name="Jett J."/>
            <person name="Kadner K."/>
            <person name="Kimball H."/>
            <person name="Kobayashi A."/>
            <person name="Lopez F."/>
            <person name="Lou Y."/>
            <person name="Martinez D."/>
            <person name="Medina C."/>
            <person name="Morgan J."/>
            <person name="Nandkeshwar R."/>
            <person name="Noonan J.P."/>
            <person name="Pitluck S."/>
            <person name="Pollard M."/>
            <person name="Predki P."/>
            <person name="Priest J."/>
            <person name="Ramirez L."/>
            <person name="Retterer J."/>
            <person name="Rodriguez A."/>
            <person name="Rogers S."/>
            <person name="Salamov A."/>
            <person name="Salazar A."/>
            <person name="Thayer N."/>
            <person name="Tice H."/>
            <person name="Tsai M."/>
            <person name="Ustaszewska A."/>
            <person name="Vo N."/>
            <person name="Wheeler J."/>
            <person name="Wu K."/>
            <person name="Yang J."/>
            <person name="Dickson M."/>
            <person name="Cheng J.-F."/>
            <person name="Eichler E.E."/>
            <person name="Olsen A."/>
            <person name="Pennacchio L.A."/>
            <person name="Rokhsar D.S."/>
            <person name="Richardson P."/>
            <person name="Lucas S.M."/>
            <person name="Myers R.M."/>
            <person name="Rubin E.M."/>
        </authorList>
    </citation>
    <scope>NUCLEOTIDE SEQUENCE [LARGE SCALE GENOMIC DNA]</scope>
</reference>
<reference key="7">
    <citation type="journal article" date="2004" name="Genome Res.">
        <title>The status, quality, and expansion of the NIH full-length cDNA project: the Mammalian Gene Collection (MGC).</title>
        <authorList>
            <consortium name="The MGC Project Team"/>
        </authorList>
    </citation>
    <scope>NUCLEOTIDE SEQUENCE [LARGE SCALE MRNA] (ISOFORMS 1 AND 2)</scope>
    <scope>VARIANT THR-1663</scope>
    <source>
        <tissue>Brain</tissue>
        <tissue>Skin</tissue>
    </source>
</reference>
<reference key="8">
    <citation type="submission" date="1999-07" db="EMBL/GenBank/DDBJ databases">
        <title>The WashU-Merck EST project.</title>
        <authorList>
            <person name="Hillier L."/>
            <person name="Allen M."/>
            <person name="Bowles L."/>
            <person name="Dubuque T."/>
            <person name="Geisel G."/>
            <person name="Jost S."/>
            <person name="Krizman D."/>
            <person name="Kucaba T."/>
            <person name="Lacy M."/>
            <person name="Le N."/>
            <person name="Lennon G."/>
            <person name="Marra M."/>
            <person name="Martin J."/>
            <person name="Moore B."/>
            <person name="Schellenberg K."/>
            <person name="Steptoe M."/>
            <person name="Tan F."/>
            <person name="Theising B."/>
            <person name="White Y."/>
            <person name="Wylie T."/>
            <person name="Waterston R."/>
            <person name="Wilson R."/>
        </authorList>
    </citation>
    <scope>NUCLEOTIDE SEQUENCE [LARGE SCALE MRNA] OF 1-126 (ISOFORM HEADLESS)</scope>
</reference>
<reference key="9">
    <citation type="journal article" date="1999" name="Genomics">
        <title>Physical map and characterization of transcripts in the candidate interval for familial chondrocalcinosis at chromosome 5p15.1.</title>
        <authorList>
            <person name="Rojas K."/>
            <person name="Serrano de la Pena L."/>
            <person name="Gallardo T."/>
            <person name="Simmons A."/>
            <person name="Nyce K."/>
            <person name="McGrath R."/>
            <person name="Considine E."/>
            <person name="Vasko A.J."/>
            <person name="Peterson E."/>
            <person name="Grady D."/>
            <person name="Cox R."/>
            <person name="Andrew L.J."/>
            <person name="Lovett M."/>
            <person name="Overhauser J."/>
            <person name="Williams C.J."/>
        </authorList>
    </citation>
    <scope>NUCLEOTIDE SEQUENCE [MRNA] OF 347-495 (ISOFORM 1)</scope>
    <source>
        <tissue>Skeletal muscle</tissue>
    </source>
</reference>
<reference key="10">
    <citation type="journal article" date="2006" name="Cell">
        <title>Global, in vivo, and site-specific phosphorylation dynamics in signaling networks.</title>
        <authorList>
            <person name="Olsen J.V."/>
            <person name="Blagoev B."/>
            <person name="Gnad F."/>
            <person name="Macek B."/>
            <person name="Kumar C."/>
            <person name="Mortensen P."/>
            <person name="Mann M."/>
        </authorList>
    </citation>
    <scope>PHOSPHORYLATION [LARGE SCALE ANALYSIS] AT SER-965</scope>
    <scope>IDENTIFICATION BY MASS SPECTROMETRY [LARGE SCALE ANALYSIS]</scope>
    <source>
        <tissue>Cervix carcinoma</tissue>
    </source>
</reference>
<reference key="11">
    <citation type="journal article" date="2006" name="J. Cell Sci.">
        <title>Myo10 in brain: developmental regulation, identification of a headless isoform and dynamics in neurons.</title>
        <authorList>
            <person name="Sousa A.D."/>
            <person name="Berg J.S."/>
            <person name="Robertson B.W."/>
            <person name="Meeker R.B."/>
            <person name="Cheney R.E."/>
        </authorList>
    </citation>
    <scope>ALTERNATIVE SPLICING (ISOFORM HEADLESS)</scope>
</reference>
<reference key="12">
    <citation type="journal article" date="2006" name="Proc. Natl. Acad. Sci. U.S.A.">
        <title>Myosin-X is a molecular motor that functions in filopodia formation.</title>
        <authorList>
            <person name="Bohil A.B."/>
            <person name="Robertson B.W."/>
            <person name="Cheney R.E."/>
        </authorList>
    </citation>
    <scope>FUNCTION IN REGULATION OF FILOPODIA ASSEMBLY AND REGULATION OF CELL SHAPE</scope>
</reference>
<reference key="13">
    <citation type="journal article" date="2008" name="FEBS Lett.">
        <title>Interaction with the IQ3 motif of myosin-10 is required for calmodulin-like protein-dependent filopodial extension.</title>
        <authorList>
            <person name="Bennett R.D."/>
            <person name="Caride A.J."/>
            <person name="Mauer A.S."/>
            <person name="Strehler E.E."/>
        </authorList>
    </citation>
    <scope>FUNCTION</scope>
    <scope>IQ3 DOMAIN</scope>
    <scope>MUTAGENESIS OF PHE-795</scope>
</reference>
<reference key="14">
    <citation type="journal article" date="2010" name="J. Biol. Chem.">
        <title>A protein interaction network for Ecm29 links the 26 S proteasome to molecular motors and endosomal components.</title>
        <authorList>
            <person name="Gorbea C."/>
            <person name="Pratt G."/>
            <person name="Ustrell V."/>
            <person name="Bell R."/>
            <person name="Sahasrabudhe S."/>
            <person name="Hughes R.E."/>
            <person name="Rechsteiner M."/>
        </authorList>
    </citation>
    <scope>INTERACTION WITH ECPAS</scope>
</reference>
<reference key="15">
    <citation type="journal article" date="2012" name="Proc. Natl. Acad. Sci. U.S.A.">
        <title>N-terminal acetylome analyses and functional insights of the N-terminal acetyltransferase NatB.</title>
        <authorList>
            <person name="Van Damme P."/>
            <person name="Lasa M."/>
            <person name="Polevoda B."/>
            <person name="Gazquez C."/>
            <person name="Elosegui-Artola A."/>
            <person name="Kim D.S."/>
            <person name="De Juan-Pardo E."/>
            <person name="Demeyer K."/>
            <person name="Hole K."/>
            <person name="Larrea E."/>
            <person name="Timmerman E."/>
            <person name="Prieto J."/>
            <person name="Arnesen T."/>
            <person name="Sherman F."/>
            <person name="Gevaert K."/>
            <person name="Aldabe R."/>
        </authorList>
    </citation>
    <scope>ACETYLATION [LARGE SCALE ANALYSIS] AT MET-1</scope>
    <scope>IDENTIFICATION BY MASS SPECTROMETRY [LARGE SCALE ANALYSIS]</scope>
</reference>
<reference key="16">
    <citation type="journal article" date="2011" name="EMBO J.">
        <title>Structural basis of cargo recognition by the myosin-X MyTH4-FERM domain.</title>
        <authorList>
            <person name="Hirano Y."/>
            <person name="Hatano T."/>
            <person name="Takahashi A."/>
            <person name="Toriyama M."/>
            <person name="Inagaki N."/>
            <person name="Hakoshima T."/>
        </authorList>
    </citation>
    <scope>X-RAY CRYSTALLOGRAPHY (1.9 ANGSTROMS) OF 1486-2058 IN COMPLEX WITH DCC</scope>
    <scope>INTERACTION WITH DCC; ITGB5 AND TUBULIN</scope>
    <scope>MUTAGENESIS OF LYS-1647; LYS-1650 AND PHE-2002</scope>
</reference>
<reference key="17">
    <citation type="journal article" date="2011" name="Proc. Natl. Acad. Sci. U.S.A.">
        <title>Cargo recognition mechanism of myosin X revealed by the structure of its tail MyTH4-FERM tandem in complex with the DCC P3 domain.</title>
        <authorList>
            <person name="Wei Z."/>
            <person name="Yan J."/>
            <person name="Lu Q."/>
            <person name="Pan L."/>
            <person name="Zhang M."/>
        </authorList>
    </citation>
    <scope>X-RAY CRYSTALLOGRAPHY (2.5 ANGSTROMS) OF 1503-2047 IN COMPLEX WITH DCC</scope>
    <scope>INTERACTION WITH DCC</scope>
    <scope>MUTAGENESIS OF 1718-SER-HIS-1719</scope>
</reference>
<reference key="18">
    <citation type="journal article" date="2012" name="Proc. Natl. Acad. Sci. U.S.A.">
        <title>Antiparallel coiled-coil-mediated dimerization of myosin X.</title>
        <authorList>
            <person name="Lu Q."/>
            <person name="Ye F."/>
            <person name="Wei Z."/>
            <person name="Wen Z."/>
            <person name="Zhang M."/>
        </authorList>
    </citation>
    <scope>STRUCTURE BY NMR OF 883-933</scope>
    <scope>SUBUNIT</scope>
    <scope>SAH DOMAIN</scope>
    <scope>COILED COIL</scope>
    <scope>MUTAGENESIS OF LEU-893 AND LYS-904</scope>
</reference>
<reference evidence="26 27 28" key="19">
    <citation type="journal article" date="2016" name="Nat. Commun.">
        <title>The myosin X motor is optimized for movement on actin bundles.</title>
        <authorList>
            <person name="Ropars V."/>
            <person name="Yang Z."/>
            <person name="Isabet T."/>
            <person name="Blanc F."/>
            <person name="Zhou K."/>
            <person name="Lin T."/>
            <person name="Liu X."/>
            <person name="Hissier P."/>
            <person name="Samazan F."/>
            <person name="Amigues B."/>
            <person name="Yang E.D."/>
            <person name="Park H."/>
            <person name="Pylypenko O."/>
            <person name="Cecchini M."/>
            <person name="Sindelar C.V."/>
            <person name="Sweeney H.L."/>
            <person name="Houdusse A."/>
        </authorList>
    </citation>
    <scope>X-RAY CRYSTALLOGRAPHY (1.80 ANGSTROMS) OF 1-741 IN COMPLEX WITH ADP</scope>
    <scope>FUNCTION</scope>
</reference>
<comment type="function">
    <text evidence="14 15 20">Myosins are actin-based motor molecules with ATPase activity. Unconventional myosins serve in intracellular movements. MYO10 binds to actin filaments and actin bundles and functions as a plus end-directed motor. Moves with higher velocity and takes larger steps on actin bundles than on single actin filaments (PubMed:27580874). The tail domain binds to membranous compartments containing phosphatidylinositol 3,4,5-trisphosphate or integrins, and mediates cargo transport along actin filaments. Regulates cell shape, cell spreading and cell adhesion. Stimulates the formation and elongation of filopodia. In hippocampal neurons it induces the formation of dendritic filopodia by trafficking the actin-remodeling protein VASP to the tips of filopodia, where it promotes actin elongation. Plays a role in formation of the podosome belt in osteoclasts.</text>
</comment>
<comment type="function">
    <molecule>Isoform Headless</molecule>
    <text evidence="3">Functions as a dominant-negative regulator of isoform 1, suppressing its filopodia-inducing and axon outgrowth-promoting activities. In hippocampal neurons, it increases VASP retention in spine heads to induce spine formation and spine head expansion (By similarity).</text>
</comment>
<comment type="subunit">
    <text evidence="1 12 16 17 18 19">Monomer, when in an inactive conformation in the cytosol. Homodimer in its active, membrane-bound conformation; antiparallel coiled coil-mediated dimer formation. Interacts strongly with CALM3 and weakly with CALM, the CALM3 interaction is essential for function in filopodial extension and motility. Interacts with ECPAS. Interacts with NEO1. Interacts with ITGB1 and ITGB3. Interacts with VASP (By similarity). Interacts with DCC and ITGB5; the presence of DCC inhibits ITGB5 binding. Interacts with tubulin; ITGB5 or DCC binding inhibits tubulin binding.</text>
</comment>
<comment type="interaction">
    <interactant intactId="EBI-307061">
        <id>Q9HD67</id>
    </interactant>
    <interactant intactId="EBI-397435">
        <id>P62158</id>
        <label>CALM3</label>
    </interactant>
    <organismsDiffer>false</organismsDiffer>
    <experiments>2</experiments>
</comment>
<comment type="interaction">
    <interactant intactId="EBI-307061">
        <id>Q9HD67</id>
    </interactant>
    <interactant intactId="EBI-747537">
        <id>P27482</id>
        <label>CALML3</label>
    </interactant>
    <organismsDiffer>false</organismsDiffer>
    <experiments>3</experiments>
</comment>
<comment type="interaction">
    <interactant intactId="EBI-307061">
        <id>Q9HD67</id>
    </interactant>
    <interactant intactId="EBI-1222919">
        <id>P43146</id>
        <label>DCC</label>
    </interactant>
    <organismsDiffer>false</organismsDiffer>
    <experiments>7</experiments>
</comment>
<comment type="interaction">
    <interactant intactId="EBI-307061">
        <id>Q9HD67</id>
    </interactant>
    <interactant intactId="EBI-1223434">
        <id>P18084</id>
        <label>ITGB5</label>
    </interactant>
    <organismsDiffer>false</organismsDiffer>
    <experiments>2</experiments>
</comment>
<comment type="interaction">
    <interactant intactId="EBI-307061">
        <id>Q9HD67</id>
    </interactant>
    <interactant intactId="EBI-1798965">
        <id>Q63155</id>
        <label>Dcc</label>
    </interactant>
    <organismsDiffer>true</organismsDiffer>
    <experiments>3</experiments>
</comment>
<comment type="subcellular location">
    <subcellularLocation>
        <location evidence="11">Cytoplasm</location>
        <location evidence="11">Cytosol</location>
    </subcellularLocation>
    <subcellularLocation>
        <location evidence="11">Cell projection</location>
        <location evidence="11">Lamellipodium</location>
    </subcellularLocation>
    <subcellularLocation>
        <location evidence="11">Cell projection</location>
        <location evidence="11">Ruffle</location>
    </subcellularLocation>
    <subcellularLocation>
        <location evidence="11">Cytoplasm</location>
        <location evidence="11">Cytoskeleton</location>
    </subcellularLocation>
    <subcellularLocation>
        <location evidence="11">Cell projection</location>
        <location evidence="11">Filopodium tip</location>
    </subcellularLocation>
    <subcellularLocation>
        <location evidence="11">Cytoplasm</location>
        <location evidence="11">Cell cortex</location>
    </subcellularLocation>
    <subcellularLocation>
        <location evidence="1">Cell projection</location>
        <location evidence="1">Filopodium membrane</location>
        <topology evidence="1">Peripheral membrane protein</topology>
    </subcellularLocation>
    <text>May be in an inactive, monomeric conformation in the cytosol. Detected in cytoplasmic punctae and in cell projections. Colocalizes with actin fibers. Undergoes forward and rearward movements within filopodia. Interacts with microtubules.</text>
</comment>
<comment type="alternative products">
    <event type="alternative promoter"/>
    <event type="alternative splicing"/>
    <isoform>
        <id>Q9HD67-1</id>
        <name>1</name>
        <sequence type="displayed"/>
    </isoform>
    <isoform>
        <id>Q9HD67-2</id>
        <name>2</name>
        <sequence type="described" ref="VSP_054976 VSP_054977"/>
    </isoform>
    <isoform>
        <id>Q9HD67-3</id>
        <name>Headless</name>
        <sequence type="described" ref="VSP_054975"/>
    </isoform>
</comment>
<comment type="tissue specificity">
    <text evidence="11">Ubiquitous.</text>
</comment>
<comment type="domain">
    <text evidence="1">Interaction between the motor domain and the tail leads to an inactive, monomeric conformation. Phospholipid binding via the PH domains leads to the formation of the active, dimeric form of the protein and strongly increases actin-dependent ATPase activity and motor activity (By similarity).</text>
</comment>
<comment type="domain">
    <text evidence="1">Interacts with membranes containing phosphatidylinositol-3,4,5-trisphosphate via the PH domains.</text>
</comment>
<comment type="domain">
    <text>IQ 3 domain mediates high-affinity calcium-dependent binding to CALM3/CLP.</text>
</comment>
<comment type="domain">
    <text evidence="3 4 19">The SAH (single alpha-helix) region is characterized by a high content of charged residues which are predicted to stabilize the alpha-helical structure by ionic bonds (By similarity). It can refold after extension suggesting an in vivo force-dependent function (By similarity). An anti-parallel coiled coil is located C-terminal to the SAH domain and mediates dimerization (PubMed:23012428).</text>
</comment>
<comment type="PTM">
    <text evidence="1">The initiator methionine for isoform Headless is removed.</text>
</comment>
<comment type="miscellaneous">
    <molecule>Isoform Headless</molecule>
    <text evidence="25">Produced by alternative promoter usage.</text>
</comment>
<comment type="similarity">
    <text evidence="25">Belongs to the TRAFAC class myosin-kinesin ATPase superfamily. Myosin family.</text>
</comment>
<comment type="caution">
    <text evidence="25">Represents an unconventional myosin. This protein should not be confused with the conventional myosin-10 (MYH10).</text>
</comment>
<comment type="sequence caution" evidence="25">
    <conflict type="erroneous initiation">
        <sequence resource="EMBL-CDS" id="BAA34519"/>
    </conflict>
    <text>Extended N-terminus.</text>
</comment>
<feature type="chain" id="PRO_0000123473" description="Unconventional myosin-X">
    <location>
        <begin position="1"/>
        <end position="2058"/>
    </location>
</feature>
<feature type="domain" description="Myosin motor" evidence="9">
    <location>
        <begin position="63"/>
        <end position="739"/>
    </location>
</feature>
<feature type="domain" description="IQ 1" evidence="6">
    <location>
        <begin position="742"/>
        <end position="763"/>
    </location>
</feature>
<feature type="domain" description="IQ 2" evidence="6">
    <location>
        <begin position="764"/>
        <end position="787"/>
    </location>
</feature>
<feature type="domain" description="IQ 3" evidence="6">
    <location>
        <begin position="788"/>
        <end position="817"/>
    </location>
</feature>
<feature type="domain" description="PH 1" evidence="7">
    <location>
        <begin position="1212"/>
        <end position="1310"/>
    </location>
</feature>
<feature type="domain" description="PH 2" evidence="7">
    <location>
        <begin position="1392"/>
        <end position="1497"/>
    </location>
</feature>
<feature type="domain" description="MyTH4" evidence="8">
    <location>
        <begin position="1547"/>
        <end position="1695"/>
    </location>
</feature>
<feature type="domain" description="FERM" evidence="5">
    <location>
        <begin position="1700"/>
        <end position="2044"/>
    </location>
</feature>
<feature type="region of interest" description="Actin-binding" evidence="9">
    <location>
        <begin position="619"/>
        <end position="641"/>
    </location>
</feature>
<feature type="region of interest" description="SAH" evidence="19">
    <location>
        <begin position="814"/>
        <end position="883"/>
    </location>
</feature>
<feature type="region of interest" description="Disordered" evidence="10">
    <location>
        <begin position="819"/>
        <end position="840"/>
    </location>
</feature>
<feature type="region of interest" description="Disordered" evidence="10">
    <location>
        <begin position="847"/>
        <end position="866"/>
    </location>
</feature>
<feature type="region of interest" description="Disordered" evidence="10">
    <location>
        <begin position="964"/>
        <end position="1090"/>
    </location>
</feature>
<feature type="coiled-coil region" evidence="19">
    <location>
        <begin position="884"/>
        <end position="934"/>
    </location>
</feature>
<feature type="compositionally biased region" description="Basic and acidic residues" evidence="10">
    <location>
        <begin position="847"/>
        <end position="861"/>
    </location>
</feature>
<feature type="compositionally biased region" description="Acidic residues" evidence="10">
    <location>
        <begin position="989"/>
        <end position="1003"/>
    </location>
</feature>
<feature type="compositionally biased region" description="Polar residues" evidence="10">
    <location>
        <begin position="1040"/>
        <end position="1049"/>
    </location>
</feature>
<feature type="compositionally biased region" description="Low complexity" evidence="10">
    <location>
        <begin position="1060"/>
        <end position="1071"/>
    </location>
</feature>
<feature type="binding site" evidence="26 27">
    <location>
        <position position="104"/>
    </location>
    <ligand>
        <name>ATP</name>
        <dbReference type="ChEBI" id="CHEBI:30616"/>
    </ligand>
</feature>
<feature type="binding site" evidence="26 27">
    <location>
        <position position="113"/>
    </location>
    <ligand>
        <name>ATP</name>
        <dbReference type="ChEBI" id="CHEBI:30616"/>
    </ligand>
</feature>
<feature type="binding site" evidence="26 27">
    <location>
        <begin position="160"/>
        <end position="165"/>
    </location>
    <ligand>
        <name>ATP</name>
        <dbReference type="ChEBI" id="CHEBI:30616"/>
    </ligand>
</feature>
<feature type="binding site" evidence="26 27">
    <location>
        <position position="215"/>
    </location>
    <ligand>
        <name>ATP</name>
        <dbReference type="ChEBI" id="CHEBI:30616"/>
    </ligand>
</feature>
<feature type="modified residue" description="N-acetylmethionine" evidence="30">
    <location>
        <position position="1"/>
    </location>
</feature>
<feature type="modified residue" description="Phosphoserine" evidence="2">
    <location>
        <position position="962"/>
    </location>
</feature>
<feature type="modified residue" description="Phosphoserine" evidence="29">
    <location>
        <position position="965"/>
    </location>
</feature>
<feature type="modified residue" description="Phosphoserine" evidence="2">
    <location>
        <position position="968"/>
    </location>
</feature>
<feature type="modified residue" description="Phosphothreonine" evidence="2">
    <location>
        <position position="1158"/>
    </location>
</feature>
<feature type="splice variant" id="VSP_054975" description="In isoform Headless." evidence="24">
    <location>
        <begin position="1"/>
        <end position="643"/>
    </location>
</feature>
<feature type="splice variant" id="VSP_054976" description="In isoform 2." evidence="23">
    <original>TYIG</original>
    <variation>VQIG</variation>
    <location>
        <begin position="94"/>
        <end position="97"/>
    </location>
</feature>
<feature type="splice variant" id="VSP_054977" description="In isoform 2." evidence="23">
    <location>
        <begin position="98"/>
        <end position="2058"/>
    </location>
</feature>
<feature type="sequence variant" id="VAR_046328" description="In dbSNP:rs17707947.">
    <original>V</original>
    <variation>I</variation>
    <location>
        <position position="32"/>
    </location>
</feature>
<feature type="sequence variant" id="VAR_061366" description="In dbSNP:rs7737765." evidence="12">
    <original>H</original>
    <variation>Y</variation>
    <location>
        <position position="148"/>
    </location>
</feature>
<feature type="sequence variant" id="VAR_046329" description="In dbSNP:rs6870170.">
    <original>E</original>
    <variation>D</variation>
    <location>
        <position position="273"/>
    </location>
</feature>
<feature type="sequence variant" id="VAR_046330" description="In dbSNP:rs11750538." evidence="11 22">
    <original>R</original>
    <variation>W</variation>
    <location>
        <position position="324"/>
    </location>
</feature>
<feature type="sequence variant" id="VAR_046331" description="In dbSNP:rs26740.">
    <original>R</original>
    <variation>Q</variation>
    <location>
        <position position="700"/>
    </location>
</feature>
<feature type="sequence variant" id="VAR_046332" description="In dbSNP:rs25901." evidence="11 12 13 21">
    <original>S</original>
    <variation>T</variation>
    <location>
        <position position="1663"/>
    </location>
</feature>
<feature type="mutagenesis site" description="Abolishes interaction with CALM3." evidence="15">
    <original>F</original>
    <variation>A</variation>
    <location>
        <position position="795"/>
    </location>
</feature>
<feature type="mutagenesis site" description="Abolishes dimerization." evidence="19">
    <original>L</original>
    <variation>Q</variation>
    <location>
        <position position="893"/>
    </location>
</feature>
<feature type="mutagenesis site" description="Abolishes dimerization." evidence="19">
    <original>K</original>
    <variation>A</variation>
    <location>
        <position position="904"/>
    </location>
</feature>
<feature type="mutagenesis site" description="Abolishes interaction with tubulin; when associated with D-1650." evidence="18">
    <original>K</original>
    <variation>D</variation>
    <location>
        <position position="1647"/>
    </location>
</feature>
<feature type="mutagenesis site" description="Abolishes interaction with tubulin; when associated with D-1647." evidence="18">
    <original>K</original>
    <variation>D</variation>
    <location>
        <position position="1650"/>
    </location>
</feature>
<feature type="mutagenesis site" description="Almost abolishes interaction with DCC." evidence="17">
    <original>SH</original>
    <variation>AA</variation>
    <location>
        <begin position="1718"/>
        <end position="1719"/>
    </location>
</feature>
<feature type="mutagenesis site" description="Abolishes interaction with DCC." evidence="18">
    <original>F</original>
    <variation>K</variation>
    <location>
        <position position="2002"/>
    </location>
</feature>
<feature type="sequence conflict" description="In Ref. 3; AAF36524." evidence="25" ref="3">
    <original>S</original>
    <variation>P</variation>
    <location>
        <position position="98"/>
    </location>
</feature>
<feature type="sequence conflict" description="In Ref. 1; AAF68025." evidence="25" ref="1">
    <original>G</original>
    <variation>W</variation>
    <location>
        <position position="256"/>
    </location>
</feature>
<feature type="sequence conflict" description="In Ref. 3; AAF36524." evidence="25" ref="3">
    <original>G</original>
    <variation>C</variation>
    <location>
        <position position="1186"/>
    </location>
</feature>
<feature type="strand" evidence="35">
    <location>
        <begin position="10"/>
        <end position="15"/>
    </location>
</feature>
<feature type="strand" evidence="35">
    <location>
        <begin position="18"/>
        <end position="28"/>
    </location>
</feature>
<feature type="strand" evidence="35">
    <location>
        <begin position="31"/>
        <end position="36"/>
    </location>
</feature>
<feature type="strand" evidence="35">
    <location>
        <begin position="41"/>
        <end position="45"/>
    </location>
</feature>
<feature type="helix" evidence="35">
    <location>
        <begin position="46"/>
        <end position="48"/>
    </location>
</feature>
<feature type="turn" evidence="35">
    <location>
        <begin position="51"/>
        <end position="53"/>
    </location>
</feature>
<feature type="strand" evidence="35">
    <location>
        <begin position="54"/>
        <end position="56"/>
    </location>
</feature>
<feature type="helix" evidence="35">
    <location>
        <begin position="68"/>
        <end position="70"/>
    </location>
</feature>
<feature type="helix" evidence="35">
    <location>
        <begin position="76"/>
        <end position="88"/>
    </location>
</feature>
<feature type="strand" evidence="35">
    <location>
        <begin position="93"/>
        <end position="96"/>
    </location>
</feature>
<feature type="strand" evidence="35">
    <location>
        <begin position="99"/>
        <end position="103"/>
    </location>
</feature>
<feature type="turn" evidence="35">
    <location>
        <begin position="110"/>
        <end position="113"/>
    </location>
</feature>
<feature type="helix" evidence="35">
    <location>
        <begin position="115"/>
        <end position="122"/>
    </location>
</feature>
<feature type="strand" evidence="35">
    <location>
        <begin position="128"/>
        <end position="130"/>
    </location>
</feature>
<feature type="helix" evidence="35">
    <location>
        <begin position="133"/>
        <end position="146"/>
    </location>
</feature>
<feature type="strand" evidence="35">
    <location>
        <begin position="147"/>
        <end position="149"/>
    </location>
</feature>
<feature type="strand" evidence="35">
    <location>
        <begin position="151"/>
        <end position="156"/>
    </location>
</feature>
<feature type="helix" evidence="35">
    <location>
        <begin position="163"/>
        <end position="180"/>
    </location>
</feature>
<feature type="helix" evidence="35">
    <location>
        <begin position="186"/>
        <end position="190"/>
    </location>
</feature>
<feature type="helix" evidence="35">
    <location>
        <begin position="193"/>
        <end position="208"/>
    </location>
</feature>
<feature type="strand" evidence="35">
    <location>
        <begin position="209"/>
        <end position="212"/>
    </location>
</feature>
<feature type="strand" evidence="35">
    <location>
        <begin position="215"/>
        <end position="219"/>
    </location>
</feature>
<feature type="strand" evidence="35">
    <location>
        <begin position="221"/>
        <end position="229"/>
    </location>
</feature>
<feature type="strand" evidence="35">
    <location>
        <begin position="235"/>
        <end position="243"/>
    </location>
</feature>
<feature type="helix" evidence="35">
    <location>
        <begin position="247"/>
        <end position="250"/>
    </location>
</feature>
<feature type="helix" evidence="35">
    <location>
        <begin position="261"/>
        <end position="269"/>
    </location>
</feature>
<feature type="helix" evidence="35">
    <location>
        <begin position="272"/>
        <end position="277"/>
    </location>
</feature>
<feature type="helix" evidence="35">
    <location>
        <begin position="283"/>
        <end position="285"/>
    </location>
</feature>
<feature type="helix" evidence="35">
    <location>
        <begin position="287"/>
        <end position="290"/>
    </location>
</feature>
<feature type="helix" evidence="35">
    <location>
        <begin position="302"/>
        <end position="315"/>
    </location>
</feature>
<feature type="helix" evidence="35">
    <location>
        <begin position="320"/>
        <end position="336"/>
    </location>
</feature>
<feature type="strand" evidence="35">
    <location>
        <begin position="341"/>
        <end position="349"/>
    </location>
</feature>
<feature type="helix" evidence="35">
    <location>
        <begin position="352"/>
        <end position="362"/>
    </location>
</feature>
<feature type="helix" evidence="35">
    <location>
        <begin position="366"/>
        <end position="374"/>
    </location>
</feature>
<feature type="strand" evidence="35">
    <location>
        <begin position="375"/>
        <end position="380"/>
    </location>
</feature>
<feature type="strand" evidence="35">
    <location>
        <begin position="383"/>
        <end position="388"/>
    </location>
</feature>
<feature type="helix" evidence="35">
    <location>
        <begin position="391"/>
        <end position="421"/>
    </location>
</feature>
<feature type="strand" evidence="35">
    <location>
        <begin position="426"/>
        <end position="434"/>
    </location>
</feature>
<feature type="strand" evidence="35">
    <location>
        <begin position="442"/>
        <end position="444"/>
    </location>
</feature>
<feature type="helix" evidence="35">
    <location>
        <begin position="446"/>
        <end position="466"/>
    </location>
</feature>
<feature type="helix" evidence="35">
    <location>
        <begin position="468"/>
        <end position="476"/>
    </location>
</feature>
<feature type="helix" evidence="35">
    <location>
        <begin position="490"/>
        <end position="497"/>
    </location>
</feature>
<feature type="helix" evidence="35">
    <location>
        <begin position="502"/>
        <end position="510"/>
    </location>
</feature>
<feature type="helix" evidence="35">
    <location>
        <begin position="517"/>
        <end position="528"/>
    </location>
</feature>
<feature type="strand" evidence="35">
    <location>
        <begin position="543"/>
        <end position="548"/>
    </location>
</feature>
<feature type="strand" evidence="35">
    <location>
        <begin position="551"/>
        <end position="556"/>
    </location>
</feature>
<feature type="helix" evidence="35">
    <location>
        <begin position="560"/>
        <end position="565"/>
    </location>
</feature>
<feature type="helix" evidence="35">
    <location>
        <begin position="570"/>
        <end position="577"/>
    </location>
</feature>
<feature type="helix" evidence="35">
    <location>
        <begin position="582"/>
        <end position="588"/>
    </location>
</feature>
<feature type="helix" evidence="35">
    <location>
        <begin position="611"/>
        <end position="627"/>
    </location>
</feature>
<feature type="strand" evidence="35">
    <location>
        <begin position="629"/>
        <end position="637"/>
    </location>
</feature>
<feature type="helix" evidence="35">
    <location>
        <begin position="650"/>
        <end position="659"/>
    </location>
</feature>
<feature type="helix" evidence="35">
    <location>
        <begin position="662"/>
        <end position="671"/>
    </location>
</feature>
<feature type="strand" evidence="35">
    <location>
        <begin position="675"/>
        <end position="678"/>
    </location>
</feature>
<feature type="helix" evidence="35">
    <location>
        <begin position="679"/>
        <end position="686"/>
    </location>
</feature>
<feature type="helix" evidence="35">
    <location>
        <begin position="687"/>
        <end position="690"/>
    </location>
</feature>
<feature type="helix" evidence="35">
    <location>
        <begin position="699"/>
        <end position="710"/>
    </location>
</feature>
<feature type="strand" evidence="35">
    <location>
        <begin position="716"/>
        <end position="719"/>
    </location>
</feature>
<feature type="strand" evidence="35">
    <location>
        <begin position="721"/>
        <end position="726"/>
    </location>
</feature>
<feature type="helix" evidence="35">
    <location>
        <begin position="728"/>
        <end position="740"/>
    </location>
</feature>
<feature type="helix" evidence="31">
    <location>
        <begin position="885"/>
        <end position="911"/>
    </location>
</feature>
<feature type="helix" evidence="31">
    <location>
        <begin position="915"/>
        <end position="926"/>
    </location>
</feature>
<feature type="helix" evidence="32">
    <location>
        <begin position="1505"/>
        <end position="1514"/>
    </location>
</feature>
<feature type="turn" evidence="32">
    <location>
        <begin position="1515"/>
        <end position="1518"/>
    </location>
</feature>
<feature type="helix" evidence="32">
    <location>
        <begin position="1520"/>
        <end position="1529"/>
    </location>
</feature>
<feature type="helix" evidence="32">
    <location>
        <begin position="1531"/>
        <end position="1533"/>
    </location>
</feature>
<feature type="helix" evidence="32">
    <location>
        <begin position="1554"/>
        <end position="1559"/>
    </location>
</feature>
<feature type="helix" evidence="32">
    <location>
        <begin position="1565"/>
        <end position="1578"/>
    </location>
</feature>
<feature type="helix" evidence="32">
    <location>
        <begin position="1586"/>
        <end position="1598"/>
    </location>
</feature>
<feature type="helix" evidence="32">
    <location>
        <begin position="1602"/>
        <end position="1613"/>
    </location>
</feature>
<feature type="helix" evidence="32">
    <location>
        <begin position="1623"/>
        <end position="1636"/>
    </location>
</feature>
<feature type="helix" evidence="32">
    <location>
        <begin position="1643"/>
        <end position="1659"/>
    </location>
</feature>
<feature type="helix" evidence="32">
    <location>
        <begin position="1664"/>
        <end position="1676"/>
    </location>
</feature>
<feature type="helix" evidence="32">
    <location>
        <begin position="1688"/>
        <end position="1695"/>
    </location>
</feature>
<feature type="strand" evidence="32">
    <location>
        <begin position="1700"/>
        <end position="1706"/>
    </location>
</feature>
<feature type="turn" evidence="33">
    <location>
        <begin position="1707"/>
        <end position="1709"/>
    </location>
</feature>
<feature type="strand" evidence="32">
    <location>
        <begin position="1711"/>
        <end position="1716"/>
    </location>
</feature>
<feature type="helix" evidence="32">
    <location>
        <begin position="1722"/>
        <end position="1732"/>
    </location>
</feature>
<feature type="strand" evidence="32">
    <location>
        <begin position="1740"/>
        <end position="1750"/>
    </location>
</feature>
<feature type="strand" evidence="32">
    <location>
        <begin position="1752"/>
        <end position="1754"/>
    </location>
</feature>
<feature type="helix" evidence="32">
    <location>
        <begin position="1761"/>
        <end position="1771"/>
    </location>
</feature>
<feature type="strand" evidence="32">
    <location>
        <begin position="1783"/>
        <end position="1790"/>
    </location>
</feature>
<feature type="strand" evidence="34">
    <location>
        <begin position="1794"/>
        <end position="1797"/>
    </location>
</feature>
<feature type="helix" evidence="32">
    <location>
        <begin position="1802"/>
        <end position="1816"/>
    </location>
</feature>
<feature type="helix" evidence="32">
    <location>
        <begin position="1824"/>
        <end position="1839"/>
    </location>
</feature>
<feature type="helix" evidence="32">
    <location>
        <begin position="1851"/>
        <end position="1853"/>
    </location>
</feature>
<feature type="helix" evidence="32">
    <location>
        <begin position="1858"/>
        <end position="1866"/>
    </location>
</feature>
<feature type="helix" evidence="32">
    <location>
        <begin position="1906"/>
        <end position="1912"/>
    </location>
</feature>
<feature type="helix" evidence="32">
    <location>
        <begin position="1914"/>
        <end position="1929"/>
    </location>
</feature>
<feature type="turn" evidence="32">
    <location>
        <begin position="1930"/>
        <end position="1933"/>
    </location>
</feature>
<feature type="helix" evidence="32">
    <location>
        <begin position="1936"/>
        <end position="1947"/>
    </location>
</feature>
<feature type="turn" evidence="32">
    <location>
        <begin position="1951"/>
        <end position="1954"/>
    </location>
</feature>
<feature type="strand" evidence="32">
    <location>
        <begin position="1956"/>
        <end position="1967"/>
    </location>
</feature>
<feature type="strand" evidence="32">
    <location>
        <begin position="1969"/>
        <end position="1975"/>
    </location>
</feature>
<feature type="strand" evidence="32">
    <location>
        <begin position="1977"/>
        <end position="1984"/>
    </location>
</feature>
<feature type="strand" evidence="32">
    <location>
        <begin position="1991"/>
        <end position="1995"/>
    </location>
</feature>
<feature type="helix" evidence="32">
    <location>
        <begin position="1996"/>
        <end position="1998"/>
    </location>
</feature>
<feature type="strand" evidence="32">
    <location>
        <begin position="1999"/>
        <end position="2006"/>
    </location>
</feature>
<feature type="strand" evidence="32">
    <location>
        <begin position="2009"/>
        <end position="2014"/>
    </location>
</feature>
<feature type="strand" evidence="32">
    <location>
        <begin position="2017"/>
        <end position="2022"/>
    </location>
</feature>
<feature type="helix" evidence="32">
    <location>
        <begin position="2026"/>
        <end position="2044"/>
    </location>
</feature>
<keyword id="KW-0002">3D-structure</keyword>
<keyword id="KW-0007">Acetylation</keyword>
<keyword id="KW-0009">Actin-binding</keyword>
<keyword id="KW-0877">Alternative promoter usage</keyword>
<keyword id="KW-0025">Alternative splicing</keyword>
<keyword id="KW-0067">ATP-binding</keyword>
<keyword id="KW-0112">Calmodulin-binding</keyword>
<keyword id="KW-1003">Cell membrane</keyword>
<keyword id="KW-0966">Cell projection</keyword>
<keyword id="KW-0175">Coiled coil</keyword>
<keyword id="KW-0963">Cytoplasm</keyword>
<keyword id="KW-0206">Cytoskeleton</keyword>
<keyword id="KW-0472">Membrane</keyword>
<keyword id="KW-0505">Motor protein</keyword>
<keyword id="KW-0518">Myosin</keyword>
<keyword id="KW-0547">Nucleotide-binding</keyword>
<keyword id="KW-0597">Phosphoprotein</keyword>
<keyword id="KW-1267">Proteomics identification</keyword>
<keyword id="KW-1185">Reference proteome</keyword>
<keyword id="KW-0677">Repeat</keyword>
<keyword id="KW-0813">Transport</keyword>
<organism>
    <name type="scientific">Homo sapiens</name>
    <name type="common">Human</name>
    <dbReference type="NCBI Taxonomy" id="9606"/>
    <lineage>
        <taxon>Eukaryota</taxon>
        <taxon>Metazoa</taxon>
        <taxon>Chordata</taxon>
        <taxon>Craniata</taxon>
        <taxon>Vertebrata</taxon>
        <taxon>Euteleostomi</taxon>
        <taxon>Mammalia</taxon>
        <taxon>Eutheria</taxon>
        <taxon>Euarchontoglires</taxon>
        <taxon>Primates</taxon>
        <taxon>Haplorrhini</taxon>
        <taxon>Catarrhini</taxon>
        <taxon>Hominidae</taxon>
        <taxon>Homo</taxon>
    </lineage>
</organism>
<sequence length="2058" mass="237347">MDNFFTEGTRVWLRENGQHFPSTVNSCAEGIVVFRTDYGQVFTYKQSTITHQKVTAMHPTNEEGVDDMASLTELHGGSIMYNLFQRYKRNQIYTYIGSILASVNPYQPIAGLYEPATMEQYSRRHLGELPPHIFAIANECYRCLWKRHDNQCILISGESGAGKTESTKLILKFLSVISQQSLELSLKEKTSCVERAILESSPIMEAFGNAKTVYNNNSSRFGKFVQLNICQKGNIQGGRIVDYLLEKNRVVRQNPGERNYHIFYALLAGLEHEEREEFYLSTPENYHYLNQSGCVEDKTISDQESFREVITAMDVMQFSKEEVREVSRLLAGILHLGNIEFITAGGAQVSFKTALGRSAELLGLDPTQLTDALTQRSMFLRGEEILTPLNVQQAVDSRDSLAMALYACCFEWVIKKINSRIKGNEDFKSIGILDIFGFENFEVNHFEQFNINYANEKLQEYFNKHIFSLEQLEYSREGLVWEDIDWIDNGECLDLIEKKLGLLALINEESHFPQATDSTLLEKLHSQHANNHFYVKPRVAVNNFGVKHYAGEVQYDVRGILEKNRDTFRDDLLNLLRESRFDFIYDLFEHVSSRNNQDTLKCGSKHRRPTVSSQFKDSLHSLMATLSSSNPFFVRCIKPNMQKMPDQFDQAVVLNQLRYSGMLETVRIRKAGYAVRRPFQDFYKRYKVLMRNLALPEDVRGKCTSLLQLYDASNSEWQLGKTKVFLRESLEQKLEKRREEEVSHAAMVIRAHVLGFLARKQYRKVLYCVVIIQKNYRAFLLRRRFLHLKKAAIVFQKQLRGQIARRVYRQLLAEKREQEEKKKQEEEEKKKREEEERERERERREAELRAQQEEETRKQQELEALQKSQKEAELTRELEKQKENKQVEEILRLEKEIEDLQRMKEQQELSLTEASLQKLQERRDQELRRLEEEACRAAQEFLESLNFDEIDECVRNIERSLSVGSEFSSELAESACEEKPNFNFSQPYPEEEVDEGFEADDDAFKDSPNPSEHGHSDQRTSGIRTSDDSSEEDPYMNDTVVPTSPSADSTVLLAPSVQDSGSLHNSSSGESTYCMPQNAGDLPSPDGDYDYDQDDYEDGAITSGSSVTFSNSYGSQWSPDYRCSVGTYNSSGAYRFSSEGAQSSFEDSEEDFDSRFDTDDELSYRRDSVYSCVTLPYFHSFLYMKGGLMNSWKRRWCVLKDETFLWFRSKQEALKQGWLHKKGGGSSTLSRRNWKKRWFVLRQSKLMYFENDSEEKLKGTVEVRTAKEIIDNTTKENGIDIIMADRTFHLIAESPEDASQWFSVLSQVHASTDQEIQEMHDEQANPQNAVGTLDVGLIDSVCASDSPDRPNSFVIITANRVLHCNADTPEEMHHWITLLQRSKGDTRVEGQEFIVRGWLHKEVKNSPKMSSLKLKKRWFVLTHNSLDYYKSSEKNALKLGTLVLNSLCSVVPPDEKIFKETGYWNVTVYGRKHCYRLYTKLLNEATRWSSAIQNVTDTKAPIDTPTQQLIQDIKENCLNSDVVEQIYKRNPILRYTHHPLHSPLLPLPYGDINLNLLKDKGYTTLQDEAIKIFNSLQQLESMSDPIPIIQGILQTGHDLRPLRDELYCQLIKQTNKVPHPGSVGNLYSWQILTCLSCTFLPSRGILKYLKFHLKRIREQFPGSEMEKYALFTYESLKKTKCREFVPSRDEIEALIHRQEMTSTVYCHGGGSCKITINSHTTAGEVVEKLIRGLAMEDSRNMFALFEYNGHVDKAIESRTVVADVLAKFEKLAATSEVGDLPWKFYFKLYCFLDTDNVPKDSVEFAFMFEQAHEAVIHGHHPAPEENLQVLAALRLQYLQGDYTLHAAIPPLEEVYSLQRLKARISQSTKTFTPCERLEKRRTSFLEGTLRRSFRTGSVVRQKVEEEQMLDMWIKEEVSSARASIIDKWRKFQGMNQEQAMAKYMALIKEWPGYGSTLFDVECKEGGFPQELWLGVSADAVSVYKRGEGRPLEVFQYEHILSFGAPLANTYKIVVDERELLFETSEVVDVAKLMKAYISMIVKKRYSTTRSASSQGSSR</sequence>
<evidence type="ECO:0000250" key="1"/>
<evidence type="ECO:0000250" key="2">
    <source>
        <dbReference type="UniProtKB" id="D3ZJP6"/>
    </source>
</evidence>
<evidence type="ECO:0000250" key="3">
    <source>
        <dbReference type="UniProtKB" id="F8VQB6"/>
    </source>
</evidence>
<evidence type="ECO:0000250" key="4">
    <source>
        <dbReference type="UniProtKB" id="P79114"/>
    </source>
</evidence>
<evidence type="ECO:0000255" key="5">
    <source>
        <dbReference type="PROSITE-ProRule" id="PRU00084"/>
    </source>
</evidence>
<evidence type="ECO:0000255" key="6">
    <source>
        <dbReference type="PROSITE-ProRule" id="PRU00116"/>
    </source>
</evidence>
<evidence type="ECO:0000255" key="7">
    <source>
        <dbReference type="PROSITE-ProRule" id="PRU00145"/>
    </source>
</evidence>
<evidence type="ECO:0000255" key="8">
    <source>
        <dbReference type="PROSITE-ProRule" id="PRU00359"/>
    </source>
</evidence>
<evidence type="ECO:0000255" key="9">
    <source>
        <dbReference type="PROSITE-ProRule" id="PRU00782"/>
    </source>
</evidence>
<evidence type="ECO:0000256" key="10">
    <source>
        <dbReference type="SAM" id="MobiDB-lite"/>
    </source>
</evidence>
<evidence type="ECO:0000269" key="11">
    <source>
    </source>
</evidence>
<evidence type="ECO:0000269" key="12">
    <source>
    </source>
</evidence>
<evidence type="ECO:0000269" key="13">
    <source>
    </source>
</evidence>
<evidence type="ECO:0000269" key="14">
    <source>
    </source>
</evidence>
<evidence type="ECO:0000269" key="15">
    <source>
    </source>
</evidence>
<evidence type="ECO:0000269" key="16">
    <source>
    </source>
</evidence>
<evidence type="ECO:0000269" key="17">
    <source>
    </source>
</evidence>
<evidence type="ECO:0000269" key="18">
    <source>
    </source>
</evidence>
<evidence type="ECO:0000269" key="19">
    <source>
    </source>
</evidence>
<evidence type="ECO:0000269" key="20">
    <source>
    </source>
</evidence>
<evidence type="ECO:0000269" key="21">
    <source>
    </source>
</evidence>
<evidence type="ECO:0000269" key="22">
    <source ref="3"/>
</evidence>
<evidence type="ECO:0000303" key="23">
    <source>
    </source>
</evidence>
<evidence type="ECO:0000303" key="24">
    <source ref="8"/>
</evidence>
<evidence type="ECO:0000305" key="25"/>
<evidence type="ECO:0007744" key="26">
    <source>
        <dbReference type="PDB" id="5I0H"/>
    </source>
</evidence>
<evidence type="ECO:0007744" key="27">
    <source>
        <dbReference type="PDB" id="5I0I"/>
    </source>
</evidence>
<evidence type="ECO:0007744" key="28">
    <source>
        <dbReference type="PDB" id="5KG8"/>
    </source>
</evidence>
<evidence type="ECO:0007744" key="29">
    <source>
    </source>
</evidence>
<evidence type="ECO:0007744" key="30">
    <source>
    </source>
</evidence>
<evidence type="ECO:0007829" key="31">
    <source>
        <dbReference type="PDB" id="2LW9"/>
    </source>
</evidence>
<evidence type="ECO:0007829" key="32">
    <source>
        <dbReference type="PDB" id="3AU4"/>
    </source>
</evidence>
<evidence type="ECO:0007829" key="33">
    <source>
        <dbReference type="PDB" id="3AU5"/>
    </source>
</evidence>
<evidence type="ECO:0007829" key="34">
    <source>
        <dbReference type="PDB" id="3PZD"/>
    </source>
</evidence>
<evidence type="ECO:0007829" key="35">
    <source>
        <dbReference type="PDB" id="5I0H"/>
    </source>
</evidence>
<protein>
    <recommendedName>
        <fullName>Unconventional myosin-X</fullName>
    </recommendedName>
    <alternativeName>
        <fullName>Unconventional myosin-10</fullName>
    </alternativeName>
</protein>